<proteinExistence type="inferred from homology"/>
<dbReference type="EMBL" id="CP001013">
    <property type="protein sequence ID" value="ACB35112.1"/>
    <property type="molecule type" value="Genomic_DNA"/>
</dbReference>
<dbReference type="RefSeq" id="WP_012347866.1">
    <property type="nucleotide sequence ID" value="NC_010524.1"/>
</dbReference>
<dbReference type="SMR" id="B1XXJ2"/>
<dbReference type="STRING" id="395495.Lcho_2847"/>
<dbReference type="KEGG" id="lch:Lcho_2847"/>
<dbReference type="eggNOG" id="COG0233">
    <property type="taxonomic scope" value="Bacteria"/>
</dbReference>
<dbReference type="HOGENOM" id="CLU_073981_2_0_4"/>
<dbReference type="OrthoDB" id="9804006at2"/>
<dbReference type="Proteomes" id="UP000001693">
    <property type="component" value="Chromosome"/>
</dbReference>
<dbReference type="GO" id="GO:0005829">
    <property type="term" value="C:cytosol"/>
    <property type="evidence" value="ECO:0007669"/>
    <property type="project" value="GOC"/>
</dbReference>
<dbReference type="GO" id="GO:0043023">
    <property type="term" value="F:ribosomal large subunit binding"/>
    <property type="evidence" value="ECO:0007669"/>
    <property type="project" value="TreeGrafter"/>
</dbReference>
<dbReference type="GO" id="GO:0002184">
    <property type="term" value="P:cytoplasmic translational termination"/>
    <property type="evidence" value="ECO:0007669"/>
    <property type="project" value="TreeGrafter"/>
</dbReference>
<dbReference type="CDD" id="cd00520">
    <property type="entry name" value="RRF"/>
    <property type="match status" value="1"/>
</dbReference>
<dbReference type="FunFam" id="1.10.132.20:FF:000001">
    <property type="entry name" value="Ribosome-recycling factor"/>
    <property type="match status" value="1"/>
</dbReference>
<dbReference type="FunFam" id="3.30.1360.40:FF:000001">
    <property type="entry name" value="Ribosome-recycling factor"/>
    <property type="match status" value="1"/>
</dbReference>
<dbReference type="Gene3D" id="3.30.1360.40">
    <property type="match status" value="1"/>
</dbReference>
<dbReference type="Gene3D" id="1.10.132.20">
    <property type="entry name" value="Ribosome-recycling factor"/>
    <property type="match status" value="1"/>
</dbReference>
<dbReference type="HAMAP" id="MF_00040">
    <property type="entry name" value="RRF"/>
    <property type="match status" value="1"/>
</dbReference>
<dbReference type="InterPro" id="IPR002661">
    <property type="entry name" value="Ribosome_recyc_fac"/>
</dbReference>
<dbReference type="InterPro" id="IPR023584">
    <property type="entry name" value="Ribosome_recyc_fac_dom"/>
</dbReference>
<dbReference type="InterPro" id="IPR036191">
    <property type="entry name" value="RRF_sf"/>
</dbReference>
<dbReference type="NCBIfam" id="TIGR00496">
    <property type="entry name" value="frr"/>
    <property type="match status" value="1"/>
</dbReference>
<dbReference type="PANTHER" id="PTHR20982:SF3">
    <property type="entry name" value="MITOCHONDRIAL RIBOSOME RECYCLING FACTOR PSEUDO 1"/>
    <property type="match status" value="1"/>
</dbReference>
<dbReference type="PANTHER" id="PTHR20982">
    <property type="entry name" value="RIBOSOME RECYCLING FACTOR"/>
    <property type="match status" value="1"/>
</dbReference>
<dbReference type="Pfam" id="PF01765">
    <property type="entry name" value="RRF"/>
    <property type="match status" value="1"/>
</dbReference>
<dbReference type="SUPFAM" id="SSF55194">
    <property type="entry name" value="Ribosome recycling factor, RRF"/>
    <property type="match status" value="1"/>
</dbReference>
<sequence length="186" mass="20928">MSIAEIKKNAEAKMAKSVEAFKNELQKIRTGRAHPGILDQVHVDYYGSNLPLSQVANVTLIDARTISVQPWEKSMAQKIEKAIRESDLGLNPSSMGDLIRVPMPALTEERRKELTKVVRHAGEDSKVAVRNLRRDANDQAKKLLKDKLISEDDERRSVDEVQKLTDRVIAEIDRLVHGKEAEILAV</sequence>
<name>RRF_LEPCP</name>
<reference key="1">
    <citation type="submission" date="2008-03" db="EMBL/GenBank/DDBJ databases">
        <title>Complete sequence of Leptothrix cholodnii SP-6.</title>
        <authorList>
            <consortium name="US DOE Joint Genome Institute"/>
            <person name="Copeland A."/>
            <person name="Lucas S."/>
            <person name="Lapidus A."/>
            <person name="Glavina del Rio T."/>
            <person name="Dalin E."/>
            <person name="Tice H."/>
            <person name="Bruce D."/>
            <person name="Goodwin L."/>
            <person name="Pitluck S."/>
            <person name="Chertkov O."/>
            <person name="Brettin T."/>
            <person name="Detter J.C."/>
            <person name="Han C."/>
            <person name="Kuske C.R."/>
            <person name="Schmutz J."/>
            <person name="Larimer F."/>
            <person name="Land M."/>
            <person name="Hauser L."/>
            <person name="Kyrpides N."/>
            <person name="Lykidis A."/>
            <person name="Emerson D."/>
            <person name="Richardson P."/>
        </authorList>
    </citation>
    <scope>NUCLEOTIDE SEQUENCE [LARGE SCALE GENOMIC DNA]</scope>
    <source>
        <strain>ATCC 51168 / LMG 8142 / SP-6</strain>
    </source>
</reference>
<comment type="function">
    <text evidence="1">Responsible for the release of ribosomes from messenger RNA at the termination of protein biosynthesis. May increase the efficiency of translation by recycling ribosomes from one round of translation to another.</text>
</comment>
<comment type="subcellular location">
    <subcellularLocation>
        <location evidence="1">Cytoplasm</location>
    </subcellularLocation>
</comment>
<comment type="similarity">
    <text evidence="1">Belongs to the RRF family.</text>
</comment>
<protein>
    <recommendedName>
        <fullName evidence="1">Ribosome-recycling factor</fullName>
        <shortName evidence="1">RRF</shortName>
    </recommendedName>
    <alternativeName>
        <fullName evidence="1">Ribosome-releasing factor</fullName>
    </alternativeName>
</protein>
<gene>
    <name evidence="1" type="primary">frr</name>
    <name type="ordered locus">Lcho_2847</name>
</gene>
<evidence type="ECO:0000255" key="1">
    <source>
        <dbReference type="HAMAP-Rule" id="MF_00040"/>
    </source>
</evidence>
<organism>
    <name type="scientific">Leptothrix cholodnii (strain ATCC 51168 / LMG 8142 / SP-6)</name>
    <name type="common">Leptothrix discophora (strain SP-6)</name>
    <dbReference type="NCBI Taxonomy" id="395495"/>
    <lineage>
        <taxon>Bacteria</taxon>
        <taxon>Pseudomonadati</taxon>
        <taxon>Pseudomonadota</taxon>
        <taxon>Betaproteobacteria</taxon>
        <taxon>Burkholderiales</taxon>
        <taxon>Sphaerotilaceae</taxon>
        <taxon>Leptothrix</taxon>
    </lineage>
</organism>
<accession>B1XXJ2</accession>
<keyword id="KW-0963">Cytoplasm</keyword>
<keyword id="KW-0648">Protein biosynthesis</keyword>
<keyword id="KW-1185">Reference proteome</keyword>
<feature type="chain" id="PRO_1000090756" description="Ribosome-recycling factor">
    <location>
        <begin position="1"/>
        <end position="186"/>
    </location>
</feature>